<comment type="function">
    <text evidence="1">Catalyzes the reversible conversion of 2-phosphoglycerate (2-PG) into phosphoenolpyruvate (PEP). It is essential for the degradation of carbohydrates via glycolysis.</text>
</comment>
<comment type="catalytic activity">
    <reaction evidence="1">
        <text>(2R)-2-phosphoglycerate = phosphoenolpyruvate + H2O</text>
        <dbReference type="Rhea" id="RHEA:10164"/>
        <dbReference type="ChEBI" id="CHEBI:15377"/>
        <dbReference type="ChEBI" id="CHEBI:58289"/>
        <dbReference type="ChEBI" id="CHEBI:58702"/>
        <dbReference type="EC" id="4.2.1.11"/>
    </reaction>
</comment>
<comment type="cofactor">
    <cofactor evidence="1">
        <name>Mg(2+)</name>
        <dbReference type="ChEBI" id="CHEBI:18420"/>
    </cofactor>
    <text evidence="1">Binds a second Mg(2+) ion via substrate during catalysis.</text>
</comment>
<comment type="pathway">
    <text evidence="1">Carbohydrate degradation; glycolysis; pyruvate from D-glyceraldehyde 3-phosphate: step 4/5.</text>
</comment>
<comment type="subcellular location">
    <subcellularLocation>
        <location evidence="1">Cytoplasm</location>
    </subcellularLocation>
    <subcellularLocation>
        <location evidence="1">Secreted</location>
    </subcellularLocation>
    <subcellularLocation>
        <location evidence="1">Cell surface</location>
    </subcellularLocation>
    <text evidence="1">Fractions of enolase are present in both the cytoplasm and on the cell surface.</text>
</comment>
<comment type="similarity">
    <text evidence="1">Belongs to the enolase family.</text>
</comment>
<name>ENO_MYCBP</name>
<feature type="chain" id="PRO_1000019221" description="Enolase">
    <location>
        <begin position="1"/>
        <end position="429"/>
    </location>
</feature>
<feature type="active site" description="Proton donor" evidence="1">
    <location>
        <position position="204"/>
    </location>
</feature>
<feature type="active site" description="Proton acceptor" evidence="1">
    <location>
        <position position="335"/>
    </location>
</feature>
<feature type="binding site" evidence="1">
    <location>
        <position position="162"/>
    </location>
    <ligand>
        <name>(2R)-2-phosphoglycerate</name>
        <dbReference type="ChEBI" id="CHEBI:58289"/>
    </ligand>
</feature>
<feature type="binding site" evidence="1">
    <location>
        <position position="241"/>
    </location>
    <ligand>
        <name>Mg(2+)</name>
        <dbReference type="ChEBI" id="CHEBI:18420"/>
    </ligand>
</feature>
<feature type="binding site" evidence="1">
    <location>
        <position position="283"/>
    </location>
    <ligand>
        <name>Mg(2+)</name>
        <dbReference type="ChEBI" id="CHEBI:18420"/>
    </ligand>
</feature>
<feature type="binding site" evidence="1">
    <location>
        <position position="310"/>
    </location>
    <ligand>
        <name>Mg(2+)</name>
        <dbReference type="ChEBI" id="CHEBI:18420"/>
    </ligand>
</feature>
<feature type="binding site" evidence="1">
    <location>
        <position position="335"/>
    </location>
    <ligand>
        <name>(2R)-2-phosphoglycerate</name>
        <dbReference type="ChEBI" id="CHEBI:58289"/>
    </ligand>
</feature>
<feature type="binding site" evidence="1">
    <location>
        <position position="364"/>
    </location>
    <ligand>
        <name>(2R)-2-phosphoglycerate</name>
        <dbReference type="ChEBI" id="CHEBI:58289"/>
    </ligand>
</feature>
<feature type="binding site" evidence="1">
    <location>
        <position position="365"/>
    </location>
    <ligand>
        <name>(2R)-2-phosphoglycerate</name>
        <dbReference type="ChEBI" id="CHEBI:58289"/>
    </ligand>
</feature>
<feature type="binding site" evidence="1">
    <location>
        <position position="386"/>
    </location>
    <ligand>
        <name>(2R)-2-phosphoglycerate</name>
        <dbReference type="ChEBI" id="CHEBI:58289"/>
    </ligand>
</feature>
<evidence type="ECO:0000255" key="1">
    <source>
        <dbReference type="HAMAP-Rule" id="MF_00318"/>
    </source>
</evidence>
<gene>
    <name evidence="1" type="primary">eno</name>
    <name type="ordered locus">BCG_1080</name>
</gene>
<reference key="1">
    <citation type="journal article" date="2007" name="Proc. Natl. Acad. Sci. U.S.A.">
        <title>Genome plasticity of BCG and impact on vaccine efficacy.</title>
        <authorList>
            <person name="Brosch R."/>
            <person name="Gordon S.V."/>
            <person name="Garnier T."/>
            <person name="Eiglmeier K."/>
            <person name="Frigui W."/>
            <person name="Valenti P."/>
            <person name="Dos Santos S."/>
            <person name="Duthoy S."/>
            <person name="Lacroix C."/>
            <person name="Garcia-Pelayo C."/>
            <person name="Inwald J.K."/>
            <person name="Golby P."/>
            <person name="Garcia J.N."/>
            <person name="Hewinson R.G."/>
            <person name="Behr M.A."/>
            <person name="Quail M.A."/>
            <person name="Churcher C."/>
            <person name="Barrell B.G."/>
            <person name="Parkhill J."/>
            <person name="Cole S.T."/>
        </authorList>
    </citation>
    <scope>NUCLEOTIDE SEQUENCE [LARGE SCALE GENOMIC DNA]</scope>
    <source>
        <strain>BCG / Pasteur 1173P2</strain>
    </source>
</reference>
<protein>
    <recommendedName>
        <fullName evidence="1">Enolase</fullName>
        <ecNumber evidence="1">4.2.1.11</ecNumber>
    </recommendedName>
    <alternativeName>
        <fullName evidence="1">2-phospho-D-glycerate hydro-lyase</fullName>
    </alternativeName>
    <alternativeName>
        <fullName evidence="1">2-phosphoglycerate dehydratase</fullName>
    </alternativeName>
</protein>
<dbReference type="EC" id="4.2.1.11" evidence="1"/>
<dbReference type="EMBL" id="AM408590">
    <property type="protein sequence ID" value="CAL71067.1"/>
    <property type="molecule type" value="Genomic_DNA"/>
</dbReference>
<dbReference type="RefSeq" id="WP_003405290.1">
    <property type="nucleotide sequence ID" value="NC_008769.1"/>
</dbReference>
<dbReference type="SMR" id="A1KHG1"/>
<dbReference type="GeneID" id="45424995"/>
<dbReference type="KEGG" id="mbb:BCG_1080"/>
<dbReference type="HOGENOM" id="CLU_031223_0_1_11"/>
<dbReference type="UniPathway" id="UPA00109">
    <property type="reaction ID" value="UER00187"/>
</dbReference>
<dbReference type="Proteomes" id="UP000001472">
    <property type="component" value="Chromosome"/>
</dbReference>
<dbReference type="GO" id="GO:0009986">
    <property type="term" value="C:cell surface"/>
    <property type="evidence" value="ECO:0007669"/>
    <property type="project" value="UniProtKB-SubCell"/>
</dbReference>
<dbReference type="GO" id="GO:0005576">
    <property type="term" value="C:extracellular region"/>
    <property type="evidence" value="ECO:0007669"/>
    <property type="project" value="UniProtKB-SubCell"/>
</dbReference>
<dbReference type="GO" id="GO:0000015">
    <property type="term" value="C:phosphopyruvate hydratase complex"/>
    <property type="evidence" value="ECO:0007669"/>
    <property type="project" value="InterPro"/>
</dbReference>
<dbReference type="GO" id="GO:0000287">
    <property type="term" value="F:magnesium ion binding"/>
    <property type="evidence" value="ECO:0007669"/>
    <property type="project" value="UniProtKB-UniRule"/>
</dbReference>
<dbReference type="GO" id="GO:0004634">
    <property type="term" value="F:phosphopyruvate hydratase activity"/>
    <property type="evidence" value="ECO:0007669"/>
    <property type="project" value="UniProtKB-UniRule"/>
</dbReference>
<dbReference type="GO" id="GO:0006096">
    <property type="term" value="P:glycolytic process"/>
    <property type="evidence" value="ECO:0007669"/>
    <property type="project" value="UniProtKB-UniRule"/>
</dbReference>
<dbReference type="CDD" id="cd03313">
    <property type="entry name" value="enolase"/>
    <property type="match status" value="1"/>
</dbReference>
<dbReference type="FunFam" id="3.20.20.120:FF:000001">
    <property type="entry name" value="Enolase"/>
    <property type="match status" value="1"/>
</dbReference>
<dbReference type="FunFam" id="3.30.390.10:FF:000001">
    <property type="entry name" value="Enolase"/>
    <property type="match status" value="1"/>
</dbReference>
<dbReference type="Gene3D" id="3.20.20.120">
    <property type="entry name" value="Enolase-like C-terminal domain"/>
    <property type="match status" value="1"/>
</dbReference>
<dbReference type="Gene3D" id="3.30.390.10">
    <property type="entry name" value="Enolase-like, N-terminal domain"/>
    <property type="match status" value="1"/>
</dbReference>
<dbReference type="HAMAP" id="MF_00318">
    <property type="entry name" value="Enolase"/>
    <property type="match status" value="1"/>
</dbReference>
<dbReference type="InterPro" id="IPR000941">
    <property type="entry name" value="Enolase"/>
</dbReference>
<dbReference type="InterPro" id="IPR036849">
    <property type="entry name" value="Enolase-like_C_sf"/>
</dbReference>
<dbReference type="InterPro" id="IPR029017">
    <property type="entry name" value="Enolase-like_N"/>
</dbReference>
<dbReference type="InterPro" id="IPR020810">
    <property type="entry name" value="Enolase_C"/>
</dbReference>
<dbReference type="InterPro" id="IPR020809">
    <property type="entry name" value="Enolase_CS"/>
</dbReference>
<dbReference type="InterPro" id="IPR020811">
    <property type="entry name" value="Enolase_N"/>
</dbReference>
<dbReference type="NCBIfam" id="TIGR01060">
    <property type="entry name" value="eno"/>
    <property type="match status" value="1"/>
</dbReference>
<dbReference type="PANTHER" id="PTHR11902">
    <property type="entry name" value="ENOLASE"/>
    <property type="match status" value="1"/>
</dbReference>
<dbReference type="PANTHER" id="PTHR11902:SF1">
    <property type="entry name" value="ENOLASE"/>
    <property type="match status" value="1"/>
</dbReference>
<dbReference type="Pfam" id="PF00113">
    <property type="entry name" value="Enolase_C"/>
    <property type="match status" value="1"/>
</dbReference>
<dbReference type="Pfam" id="PF03952">
    <property type="entry name" value="Enolase_N"/>
    <property type="match status" value="1"/>
</dbReference>
<dbReference type="PIRSF" id="PIRSF001400">
    <property type="entry name" value="Enolase"/>
    <property type="match status" value="1"/>
</dbReference>
<dbReference type="PRINTS" id="PR00148">
    <property type="entry name" value="ENOLASE"/>
</dbReference>
<dbReference type="SFLD" id="SFLDF00002">
    <property type="entry name" value="enolase"/>
    <property type="match status" value="1"/>
</dbReference>
<dbReference type="SFLD" id="SFLDG00178">
    <property type="entry name" value="enolase"/>
    <property type="match status" value="1"/>
</dbReference>
<dbReference type="SMART" id="SM01192">
    <property type="entry name" value="Enolase_C"/>
    <property type="match status" value="1"/>
</dbReference>
<dbReference type="SMART" id="SM01193">
    <property type="entry name" value="Enolase_N"/>
    <property type="match status" value="1"/>
</dbReference>
<dbReference type="SUPFAM" id="SSF51604">
    <property type="entry name" value="Enolase C-terminal domain-like"/>
    <property type="match status" value="1"/>
</dbReference>
<dbReference type="SUPFAM" id="SSF54826">
    <property type="entry name" value="Enolase N-terminal domain-like"/>
    <property type="match status" value="1"/>
</dbReference>
<dbReference type="PROSITE" id="PS00164">
    <property type="entry name" value="ENOLASE"/>
    <property type="match status" value="1"/>
</dbReference>
<organism>
    <name type="scientific">Mycobacterium bovis (strain BCG / Pasteur 1173P2)</name>
    <dbReference type="NCBI Taxonomy" id="410289"/>
    <lineage>
        <taxon>Bacteria</taxon>
        <taxon>Bacillati</taxon>
        <taxon>Actinomycetota</taxon>
        <taxon>Actinomycetes</taxon>
        <taxon>Mycobacteriales</taxon>
        <taxon>Mycobacteriaceae</taxon>
        <taxon>Mycobacterium</taxon>
        <taxon>Mycobacterium tuberculosis complex</taxon>
    </lineage>
</organism>
<keyword id="KW-0963">Cytoplasm</keyword>
<keyword id="KW-0324">Glycolysis</keyword>
<keyword id="KW-0456">Lyase</keyword>
<keyword id="KW-0460">Magnesium</keyword>
<keyword id="KW-0479">Metal-binding</keyword>
<keyword id="KW-0964">Secreted</keyword>
<accession>A1KHG1</accession>
<proteinExistence type="inferred from homology"/>
<sequence>MPIIEQVGAREILDSRGNPTVEVEVALIDGTFARAAVPSGASTGEHEAVELRDGGDRYGGKGVQKAVQAVLDEIGPAVIGLNADDQRLVDQALVDLDGTPDKSRLGGNAILGVSLAVAKAAADSAELPLFRYVGGPNAHILPVPMMNILNGGAHADTAVDIQEFMVAPIGAPSFVEALRWGAEVYHALKSVLKKEGLSTGLGDEGGFAPDVAGTTAALDLISRAIESAGLRPGADVALALDAAATEFFTDGTGYVFEGTTRTADQMTEFYAGLLGAYPLVSIEDPLSEDDWDGWAALTASIGDRVQIVGDDIFVTNPERLEEGIERGVANALLVKVNQIGTLTETLDAVTLAHHGGYRTMISHRSGETEDTMIADLAVAIGSGQIKTGAPARSERVAKYNQLLRIEEALGDAARYAGDLAFPRFACETK</sequence>